<protein>
    <recommendedName>
        <fullName evidence="1">Malate dehydrogenase</fullName>
        <ecNumber evidence="1">1.1.1.37</ecNumber>
    </recommendedName>
</protein>
<sequence>MKVTVLGAAGGIGQALALLLKTQLPAGSELSLYDIAPVTPGVAVDLSHIPTSVKIAGFSGEDATPALKGADVVLISAGVARKPGMDRSDLFNVNAGIVRNLIEQVAATCPKALIGIITNPVNTTVAIAAEVLKKAGVYDKNRLFGITTLDIIRANAFVAELKGKQPEEVNVPVIGGHSGVTILPLLSQVPGVSFNEQETASLTKRIQNAGTEVVEAKAGGGSATLSMGQAAARFGLALVRALKGESNVIECAYVEGEGEYARFFSQPLLLGKNGIVERRPVGELSAFEQHALSSMLDTLKKDITQGEEFVK</sequence>
<keyword id="KW-0520">NAD</keyword>
<keyword id="KW-0560">Oxidoreductase</keyword>
<keyword id="KW-1185">Reference proteome</keyword>
<keyword id="KW-0816">Tricarboxylic acid cycle</keyword>
<evidence type="ECO:0000255" key="1">
    <source>
        <dbReference type="HAMAP-Rule" id="MF_01516"/>
    </source>
</evidence>
<feature type="chain" id="PRO_1000146177" description="Malate dehydrogenase">
    <location>
        <begin position="1"/>
        <end position="311"/>
    </location>
</feature>
<feature type="active site" description="Proton acceptor" evidence="1">
    <location>
        <position position="177"/>
    </location>
</feature>
<feature type="binding site" evidence="1">
    <location>
        <begin position="7"/>
        <end position="13"/>
    </location>
    <ligand>
        <name>NAD(+)</name>
        <dbReference type="ChEBI" id="CHEBI:57540"/>
    </ligand>
</feature>
<feature type="binding site" evidence="1">
    <location>
        <position position="34"/>
    </location>
    <ligand>
        <name>NAD(+)</name>
        <dbReference type="ChEBI" id="CHEBI:57540"/>
    </ligand>
</feature>
<feature type="binding site" evidence="1">
    <location>
        <position position="81"/>
    </location>
    <ligand>
        <name>substrate</name>
    </ligand>
</feature>
<feature type="binding site" evidence="1">
    <location>
        <position position="87"/>
    </location>
    <ligand>
        <name>substrate</name>
    </ligand>
</feature>
<feature type="binding site" evidence="1">
    <location>
        <position position="94"/>
    </location>
    <ligand>
        <name>NAD(+)</name>
        <dbReference type="ChEBI" id="CHEBI:57540"/>
    </ligand>
</feature>
<feature type="binding site" evidence="1">
    <location>
        <begin position="117"/>
        <end position="119"/>
    </location>
    <ligand>
        <name>NAD(+)</name>
        <dbReference type="ChEBI" id="CHEBI:57540"/>
    </ligand>
</feature>
<feature type="binding site" evidence="1">
    <location>
        <position position="119"/>
    </location>
    <ligand>
        <name>substrate</name>
    </ligand>
</feature>
<feature type="binding site" evidence="1">
    <location>
        <position position="153"/>
    </location>
    <ligand>
        <name>substrate</name>
    </ligand>
</feature>
<feature type="binding site" evidence="1">
    <location>
        <position position="227"/>
    </location>
    <ligand>
        <name>NAD(+)</name>
        <dbReference type="ChEBI" id="CHEBI:57540"/>
    </ligand>
</feature>
<gene>
    <name evidence="1" type="primary">mdh</name>
    <name type="ordered locus">ETA_02980</name>
</gene>
<accession>B2VGW7</accession>
<dbReference type="EC" id="1.1.1.37" evidence="1"/>
<dbReference type="EMBL" id="CU468135">
    <property type="protein sequence ID" value="CAO95344.1"/>
    <property type="molecule type" value="Genomic_DNA"/>
</dbReference>
<dbReference type="RefSeq" id="WP_012440062.1">
    <property type="nucleotide sequence ID" value="NC_010694.1"/>
</dbReference>
<dbReference type="SMR" id="B2VGW7"/>
<dbReference type="STRING" id="465817.ETA_02980"/>
<dbReference type="KEGG" id="eta:ETA_02980"/>
<dbReference type="eggNOG" id="COG0039">
    <property type="taxonomic scope" value="Bacteria"/>
</dbReference>
<dbReference type="HOGENOM" id="CLU_047181_0_1_6"/>
<dbReference type="OrthoDB" id="9802969at2"/>
<dbReference type="Proteomes" id="UP000001726">
    <property type="component" value="Chromosome"/>
</dbReference>
<dbReference type="GO" id="GO:0005737">
    <property type="term" value="C:cytoplasm"/>
    <property type="evidence" value="ECO:0007669"/>
    <property type="project" value="TreeGrafter"/>
</dbReference>
<dbReference type="GO" id="GO:0030060">
    <property type="term" value="F:L-malate dehydrogenase (NAD+) activity"/>
    <property type="evidence" value="ECO:0007669"/>
    <property type="project" value="UniProtKB-UniRule"/>
</dbReference>
<dbReference type="GO" id="GO:0006108">
    <property type="term" value="P:malate metabolic process"/>
    <property type="evidence" value="ECO:0007669"/>
    <property type="project" value="InterPro"/>
</dbReference>
<dbReference type="GO" id="GO:0006099">
    <property type="term" value="P:tricarboxylic acid cycle"/>
    <property type="evidence" value="ECO:0007669"/>
    <property type="project" value="UniProtKB-UniRule"/>
</dbReference>
<dbReference type="CDD" id="cd01337">
    <property type="entry name" value="MDH_glyoxysomal_mitochondrial"/>
    <property type="match status" value="1"/>
</dbReference>
<dbReference type="FunFam" id="3.40.50.720:FF:000017">
    <property type="entry name" value="Malate dehydrogenase"/>
    <property type="match status" value="1"/>
</dbReference>
<dbReference type="FunFam" id="3.90.110.10:FF:000001">
    <property type="entry name" value="Malate dehydrogenase"/>
    <property type="match status" value="1"/>
</dbReference>
<dbReference type="Gene3D" id="3.90.110.10">
    <property type="entry name" value="Lactate dehydrogenase/glycoside hydrolase, family 4, C-terminal"/>
    <property type="match status" value="1"/>
</dbReference>
<dbReference type="Gene3D" id="3.40.50.720">
    <property type="entry name" value="NAD(P)-binding Rossmann-like Domain"/>
    <property type="match status" value="1"/>
</dbReference>
<dbReference type="HAMAP" id="MF_01516">
    <property type="entry name" value="Malate_dehydrog_1"/>
    <property type="match status" value="1"/>
</dbReference>
<dbReference type="InterPro" id="IPR001557">
    <property type="entry name" value="L-lactate/malate_DH"/>
</dbReference>
<dbReference type="InterPro" id="IPR022383">
    <property type="entry name" value="Lactate/malate_DH_C"/>
</dbReference>
<dbReference type="InterPro" id="IPR001236">
    <property type="entry name" value="Lactate/malate_DH_N"/>
</dbReference>
<dbReference type="InterPro" id="IPR015955">
    <property type="entry name" value="Lactate_DH/Glyco_Ohase_4_C"/>
</dbReference>
<dbReference type="InterPro" id="IPR001252">
    <property type="entry name" value="Malate_DH_AS"/>
</dbReference>
<dbReference type="InterPro" id="IPR010097">
    <property type="entry name" value="Malate_DH_type1"/>
</dbReference>
<dbReference type="InterPro" id="IPR023958">
    <property type="entry name" value="Malate_DH_type1_bac"/>
</dbReference>
<dbReference type="InterPro" id="IPR036291">
    <property type="entry name" value="NAD(P)-bd_dom_sf"/>
</dbReference>
<dbReference type="NCBIfam" id="TIGR01772">
    <property type="entry name" value="MDH_euk_gproteo"/>
    <property type="match status" value="1"/>
</dbReference>
<dbReference type="PANTHER" id="PTHR11540">
    <property type="entry name" value="MALATE AND LACTATE DEHYDROGENASE"/>
    <property type="match status" value="1"/>
</dbReference>
<dbReference type="PANTHER" id="PTHR11540:SF16">
    <property type="entry name" value="MALATE DEHYDROGENASE, MITOCHONDRIAL"/>
    <property type="match status" value="1"/>
</dbReference>
<dbReference type="Pfam" id="PF02866">
    <property type="entry name" value="Ldh_1_C"/>
    <property type="match status" value="1"/>
</dbReference>
<dbReference type="Pfam" id="PF00056">
    <property type="entry name" value="Ldh_1_N"/>
    <property type="match status" value="1"/>
</dbReference>
<dbReference type="PIRSF" id="PIRSF000102">
    <property type="entry name" value="Lac_mal_DH"/>
    <property type="match status" value="1"/>
</dbReference>
<dbReference type="SUPFAM" id="SSF56327">
    <property type="entry name" value="LDH C-terminal domain-like"/>
    <property type="match status" value="1"/>
</dbReference>
<dbReference type="SUPFAM" id="SSF51735">
    <property type="entry name" value="NAD(P)-binding Rossmann-fold domains"/>
    <property type="match status" value="1"/>
</dbReference>
<dbReference type="PROSITE" id="PS00068">
    <property type="entry name" value="MDH"/>
    <property type="match status" value="1"/>
</dbReference>
<proteinExistence type="inferred from homology"/>
<organism>
    <name type="scientific">Erwinia tasmaniensis (strain DSM 17950 / CFBP 7177 / CIP 109463 / NCPPB 4357 / Et1/99)</name>
    <dbReference type="NCBI Taxonomy" id="465817"/>
    <lineage>
        <taxon>Bacteria</taxon>
        <taxon>Pseudomonadati</taxon>
        <taxon>Pseudomonadota</taxon>
        <taxon>Gammaproteobacteria</taxon>
        <taxon>Enterobacterales</taxon>
        <taxon>Erwiniaceae</taxon>
        <taxon>Erwinia</taxon>
    </lineage>
</organism>
<reference key="1">
    <citation type="journal article" date="2008" name="Environ. Microbiol.">
        <title>The genome of Erwinia tasmaniensis strain Et1/99, a non-pathogenic bacterium in the genus Erwinia.</title>
        <authorList>
            <person name="Kube M."/>
            <person name="Migdoll A.M."/>
            <person name="Mueller I."/>
            <person name="Kuhl H."/>
            <person name="Beck A."/>
            <person name="Reinhardt R."/>
            <person name="Geider K."/>
        </authorList>
    </citation>
    <scope>NUCLEOTIDE SEQUENCE [LARGE SCALE GENOMIC DNA]</scope>
    <source>
        <strain>DSM 17950 / CFBP 7177 / CIP 109463 / NCPPB 4357 / Et1/99</strain>
    </source>
</reference>
<name>MDH_ERWT9</name>
<comment type="function">
    <text evidence="1">Catalyzes the reversible oxidation of malate to oxaloacetate.</text>
</comment>
<comment type="catalytic activity">
    <reaction evidence="1">
        <text>(S)-malate + NAD(+) = oxaloacetate + NADH + H(+)</text>
        <dbReference type="Rhea" id="RHEA:21432"/>
        <dbReference type="ChEBI" id="CHEBI:15378"/>
        <dbReference type="ChEBI" id="CHEBI:15589"/>
        <dbReference type="ChEBI" id="CHEBI:16452"/>
        <dbReference type="ChEBI" id="CHEBI:57540"/>
        <dbReference type="ChEBI" id="CHEBI:57945"/>
        <dbReference type="EC" id="1.1.1.37"/>
    </reaction>
</comment>
<comment type="subunit">
    <text evidence="1">Homodimer.</text>
</comment>
<comment type="similarity">
    <text evidence="1">Belongs to the LDH/MDH superfamily. MDH type 1 family.</text>
</comment>